<name>GP4_EAVBU</name>
<feature type="signal peptide" evidence="2">
    <location>
        <begin position="1"/>
        <end position="21"/>
    </location>
</feature>
<feature type="chain" id="PRO_0000080880" description="Glycoprotein 4">
    <location>
        <begin position="22"/>
        <end position="152"/>
    </location>
</feature>
<feature type="topological domain" description="Virion surface" evidence="4">
    <location>
        <begin position="22"/>
        <end position="120"/>
    </location>
</feature>
<feature type="transmembrane region" description="Helical" evidence="2">
    <location>
        <begin position="121"/>
        <end position="141"/>
    </location>
</feature>
<feature type="topological domain" description="Intravirion" evidence="4">
    <location>
        <begin position="142"/>
        <end position="152"/>
    </location>
</feature>
<feature type="glycosylation site" description="N-linked (GlcNAc...) asparagine; by host" evidence="2">
    <location>
        <position position="33"/>
    </location>
</feature>
<feature type="glycosylation site" description="N-linked (GlcNAc...) asparagine; by host" evidence="2">
    <location>
        <position position="55"/>
    </location>
</feature>
<feature type="glycosylation site" description="N-linked (GlcNAc...) asparagine; by host" evidence="2">
    <location>
        <position position="90"/>
    </location>
</feature>
<comment type="function">
    <text evidence="3">Minor envelope protein. Part of the glycoproteins heterotrimer GP2b-GP3-GP4 which is probably responsible for the attachment to target host cell. This attachment induces virion internalization predominantly through clathrin-dependent endocytosis.</text>
</comment>
<comment type="subunit">
    <text evidence="1 4">Heterotrimer of GP2b, GP3, and GP4; disulfide-linked (Probable). The GP2b-GP3-GP4 complex associates with the E protein (By similarity). Interacts with glycoprotein 5 (By similarity).</text>
</comment>
<comment type="subcellular location">
    <subcellularLocation>
        <location evidence="5">Virion membrane</location>
        <topology evidence="5">Single-pass type I membrane protein</topology>
    </subcellularLocation>
    <subcellularLocation>
        <location evidence="5">Host endoplasmic reticulum membrane</location>
        <topology evidence="5">Single-pass type I membrane protein</topology>
    </subcellularLocation>
    <subcellularLocation>
        <location evidence="5">Host Golgi apparatus membrane</location>
        <topology evidence="5">Single-pass type I membrane protein</topology>
    </subcellularLocation>
    <subcellularLocation>
        <location evidence="1">Secreted</location>
    </subcellularLocation>
    <text>Only a small fraction of GP4 synthesized in infected cells ends up in virions.</text>
</comment>
<comment type="similarity">
    <text evidence="4">Belongs to the arteriviridae GP4 protein family.</text>
</comment>
<keyword id="KW-1165">Clathrin-mediated endocytosis of virus by host</keyword>
<keyword id="KW-1015">Disulfide bond</keyword>
<keyword id="KW-0325">Glycoprotein</keyword>
<keyword id="KW-1038">Host endoplasmic reticulum</keyword>
<keyword id="KW-1040">Host Golgi apparatus</keyword>
<keyword id="KW-1043">Host membrane</keyword>
<keyword id="KW-0945">Host-virus interaction</keyword>
<keyword id="KW-0472">Membrane</keyword>
<keyword id="KW-1185">Reference proteome</keyword>
<keyword id="KW-0964">Secreted</keyword>
<keyword id="KW-0732">Signal</keyword>
<keyword id="KW-0812">Transmembrane</keyword>
<keyword id="KW-1133">Transmembrane helix</keyword>
<keyword id="KW-1161">Viral attachment to host cell</keyword>
<keyword id="KW-0261">Viral envelope protein</keyword>
<keyword id="KW-1162">Viral penetration into host cytoplasm</keyword>
<keyword id="KW-0946">Virion</keyword>
<keyword id="KW-1164">Virus endocytosis by host</keyword>
<keyword id="KW-1160">Virus entry into host cell</keyword>
<gene>
    <name type="primary">GP4</name>
    <name type="ORF">4</name>
</gene>
<organism>
    <name type="scientific">Equine arteritis virus (strain Bucyrus)</name>
    <name type="common">EAV</name>
    <dbReference type="NCBI Taxonomy" id="299386"/>
    <lineage>
        <taxon>Viruses</taxon>
        <taxon>Riboviria</taxon>
        <taxon>Orthornavirae</taxon>
        <taxon>Pisuviricota</taxon>
        <taxon>Pisoniviricetes</taxon>
        <taxon>Nidovirales</taxon>
        <taxon>Arnidovirineae</taxon>
        <taxon>Arteriviridae</taxon>
        <taxon>Equarterivirinae</taxon>
        <taxon>Alphaarterivirus</taxon>
        <taxon>Alphaarterivirus equid</taxon>
    </lineage>
</organism>
<organismHost>
    <name type="scientific">Equidae</name>
    <name type="common">horses</name>
    <dbReference type="NCBI Taxonomy" id="9788"/>
</organismHost>
<sequence>MKIYGCISGLLLFVGLPCCWCTFYPCHAAEARNFTYISHGLGHVHGHEGCRNFINVTHSAFLYLNPTTPTAPAITHCLLLVLAAKMEHPNATIWLQLQPFGYHVAGDVIVNLEEDKRHPYFKLLRAPALPLGFVAIVYVLLRLVRWAQRCYL</sequence>
<protein>
    <recommendedName>
        <fullName>Glycoprotein 4</fullName>
        <shortName>Protein GP4</shortName>
    </recommendedName>
</protein>
<accession>P28994</accession>
<reference key="1">
    <citation type="journal article" date="1991" name="J. Virol.">
        <title>Equine arteritis virus is not a togavirus but belongs to the coronaviruslike superfamily.</title>
        <authorList>
            <person name="den Boon J.A."/>
            <person name="Snijder E.J."/>
            <person name="Chirnside E.D."/>
            <person name="de Vries A.A.F."/>
            <person name="Horzinek M.C."/>
            <person name="Spaan W.J.M."/>
        </authorList>
    </citation>
    <scope>NUCLEOTIDE SEQUENCE [GENOMIC RNA]</scope>
</reference>
<reference key="2">
    <citation type="journal article" date="2002" name="J. Virol.">
        <title>Characterization of two new structural glycoproteins, GP(3) and GP(4), of equine arteritis virus.</title>
        <authorList>
            <person name="Wieringa R."/>
            <person name="de Vries A.A."/>
            <person name="Raamsman M.J."/>
            <person name="Rottier P.J."/>
        </authorList>
    </citation>
    <scope>CHARACTERIZATION</scope>
</reference>
<reference key="3">
    <citation type="journal article" date="2003" name="J. Virol.">
        <title>Formation of disulfide-linked complexes between the three minor envelope glycoproteins (GP2b, GP3, and GP4) of equine arteritis virus.</title>
        <authorList>
            <person name="Wieringa R."/>
            <person name="de Vries A.A."/>
            <person name="Rottier P.J."/>
        </authorList>
    </citation>
    <scope>SUBUNIT</scope>
    <scope>SUBCELLULAR LOCATION</scope>
</reference>
<reference key="4">
    <citation type="journal article" date="2008" name="Virology">
        <title>Equine arteritis virus is delivered to an acidic compartment of host cells via clathrin-dependent endocytosis.</title>
        <authorList>
            <person name="Nitschke M."/>
            <person name="Korte T."/>
            <person name="Tielesch C."/>
            <person name="Ter-Avetisyan G."/>
            <person name="Tunnemann G."/>
            <person name="Cardoso M.C."/>
            <person name="Veit M."/>
            <person name="Herrmann A."/>
        </authorList>
    </citation>
    <scope>FUNCTION OF GP2B-GP3-GP4 HETEROTRIMER</scope>
</reference>
<proteinExistence type="evidence at protein level"/>
<evidence type="ECO:0000250" key="1"/>
<evidence type="ECO:0000255" key="2"/>
<evidence type="ECO:0000269" key="3">
    <source>
    </source>
</evidence>
<evidence type="ECO:0000305" key="4"/>
<evidence type="ECO:0000305" key="5">
    <source>
    </source>
</evidence>
<dbReference type="EMBL" id="X53459">
    <property type="protein sequence ID" value="CAA37543.1"/>
    <property type="molecule type" value="Genomic_RNA"/>
</dbReference>
<dbReference type="PIR" id="E39925">
    <property type="entry name" value="E39925"/>
</dbReference>
<dbReference type="RefSeq" id="NP_065658.1">
    <property type="nucleotide sequence ID" value="NC_002532.2"/>
</dbReference>
<dbReference type="GlyCosmos" id="P28994">
    <property type="glycosylation" value="3 sites, No reported glycans"/>
</dbReference>
<dbReference type="GeneID" id="921343"/>
<dbReference type="KEGG" id="vg:921343"/>
<dbReference type="Proteomes" id="UP000000353">
    <property type="component" value="Segment"/>
</dbReference>
<dbReference type="GO" id="GO:0005576">
    <property type="term" value="C:extracellular region"/>
    <property type="evidence" value="ECO:0007669"/>
    <property type="project" value="UniProtKB-SubCell"/>
</dbReference>
<dbReference type="GO" id="GO:0044167">
    <property type="term" value="C:host cell endoplasmic reticulum membrane"/>
    <property type="evidence" value="ECO:0007669"/>
    <property type="project" value="UniProtKB-SubCell"/>
</dbReference>
<dbReference type="GO" id="GO:0044178">
    <property type="term" value="C:host cell Golgi membrane"/>
    <property type="evidence" value="ECO:0007669"/>
    <property type="project" value="UniProtKB-SubCell"/>
</dbReference>
<dbReference type="GO" id="GO:0016020">
    <property type="term" value="C:membrane"/>
    <property type="evidence" value="ECO:0007669"/>
    <property type="project" value="UniProtKB-KW"/>
</dbReference>
<dbReference type="GO" id="GO:0019031">
    <property type="term" value="C:viral envelope"/>
    <property type="evidence" value="ECO:0007669"/>
    <property type="project" value="UniProtKB-KW"/>
</dbReference>
<dbReference type="GO" id="GO:0055036">
    <property type="term" value="C:virion membrane"/>
    <property type="evidence" value="ECO:0007669"/>
    <property type="project" value="UniProtKB-SubCell"/>
</dbReference>
<dbReference type="GO" id="GO:0075512">
    <property type="term" value="P:clathrin-dependent endocytosis of virus by host cell"/>
    <property type="evidence" value="ECO:0007669"/>
    <property type="project" value="UniProtKB-KW"/>
</dbReference>
<dbReference type="GO" id="GO:0019062">
    <property type="term" value="P:virion attachment to host cell"/>
    <property type="evidence" value="ECO:0007669"/>
    <property type="project" value="UniProtKB-KW"/>
</dbReference>
<dbReference type="InterPro" id="IPR004257">
    <property type="entry name" value="Equine_arteritis_virus_Gp4"/>
</dbReference>
<dbReference type="Pfam" id="PF03010">
    <property type="entry name" value="GP4"/>
    <property type="match status" value="1"/>
</dbReference>